<name>ECFA2_BACC1</name>
<keyword id="KW-0067">ATP-binding</keyword>
<keyword id="KW-1003">Cell membrane</keyword>
<keyword id="KW-0472">Membrane</keyword>
<keyword id="KW-0547">Nucleotide-binding</keyword>
<keyword id="KW-1278">Translocase</keyword>
<keyword id="KW-0813">Transport</keyword>
<reference key="1">
    <citation type="journal article" date="2004" name="Nucleic Acids Res.">
        <title>The genome sequence of Bacillus cereus ATCC 10987 reveals metabolic adaptations and a large plasmid related to Bacillus anthracis pXO1.</title>
        <authorList>
            <person name="Rasko D.A."/>
            <person name="Ravel J."/>
            <person name="Oekstad O.A."/>
            <person name="Helgason E."/>
            <person name="Cer R.Z."/>
            <person name="Jiang L."/>
            <person name="Shores K.A."/>
            <person name="Fouts D.E."/>
            <person name="Tourasse N.J."/>
            <person name="Angiuoli S.V."/>
            <person name="Kolonay J.F."/>
            <person name="Nelson W.C."/>
            <person name="Kolstoe A.-B."/>
            <person name="Fraser C.M."/>
            <person name="Read T.D."/>
        </authorList>
    </citation>
    <scope>NUCLEOTIDE SEQUENCE [LARGE SCALE GENOMIC DNA]</scope>
    <source>
        <strain>ATCC 10987 / NRS 248</strain>
    </source>
</reference>
<sequence length="293" mass="32674">MEITFQKVEHRYQHKTPFERRALYDVDVSFPSGGYYAIIGHTGSGKSTMIQHLNGLLQPTNGTVQIGEHFISAGKKEKKLKPLRKKVGVVFQFPEHQLFEETVEKDICFGPTNFGVSVEEAKQKAREAIELVGLEPELLARSPFELSGGQMRRVAIAGVLAMEPEVLVLDEPTAGLDPKGQNELMEMFYKLHKEKGLTVILVTHNMEDAAKYAEQIVVMHKGTVFLQGSAEEVFSHADELEKIGVDLPMSLKYKRAIEEKFGISIPKATLSLEDLTHEVVQVLRKGGHESCSS</sequence>
<gene>
    <name evidence="1" type="primary">ecfA2</name>
    <name type="synonym">cbiO2</name>
    <name type="ordered locus">BCE_0140</name>
</gene>
<protein>
    <recommendedName>
        <fullName evidence="1">Energy-coupling factor transporter ATP-binding protein EcfA2</fullName>
        <shortName evidence="1">ECF transporter A component EcfA2</shortName>
        <ecNumber evidence="1">7.-.-.-</ecNumber>
    </recommendedName>
</protein>
<comment type="function">
    <text evidence="1">ATP-binding (A) component of a common energy-coupling factor (ECF) ABC-transporter complex. Unlike classic ABC transporters this ECF transporter provides the energy necessary to transport a number of different substrates.</text>
</comment>
<comment type="subunit">
    <text evidence="1">Forms a stable energy-coupling factor (ECF) transporter complex composed of 2 membrane-embedded substrate-binding proteins (S component), 2 ATP-binding proteins (A component) and 2 transmembrane proteins (T component).</text>
</comment>
<comment type="subcellular location">
    <subcellularLocation>
        <location evidence="1">Cell membrane</location>
        <topology evidence="1">Peripheral membrane protein</topology>
    </subcellularLocation>
</comment>
<comment type="similarity">
    <text evidence="1">Belongs to the ABC transporter superfamily. Energy-coupling factor EcfA family.</text>
</comment>
<dbReference type="EC" id="7.-.-.-" evidence="1"/>
<dbReference type="EMBL" id="AE017194">
    <property type="protein sequence ID" value="AAS39076.1"/>
    <property type="molecule type" value="Genomic_DNA"/>
</dbReference>
<dbReference type="SMR" id="Q73F66"/>
<dbReference type="KEGG" id="bca:BCE_0140"/>
<dbReference type="HOGENOM" id="CLU_000604_1_22_9"/>
<dbReference type="Proteomes" id="UP000002527">
    <property type="component" value="Chromosome"/>
</dbReference>
<dbReference type="GO" id="GO:0043190">
    <property type="term" value="C:ATP-binding cassette (ABC) transporter complex"/>
    <property type="evidence" value="ECO:0007669"/>
    <property type="project" value="TreeGrafter"/>
</dbReference>
<dbReference type="GO" id="GO:0005524">
    <property type="term" value="F:ATP binding"/>
    <property type="evidence" value="ECO:0007669"/>
    <property type="project" value="UniProtKB-KW"/>
</dbReference>
<dbReference type="GO" id="GO:0016887">
    <property type="term" value="F:ATP hydrolysis activity"/>
    <property type="evidence" value="ECO:0007669"/>
    <property type="project" value="InterPro"/>
</dbReference>
<dbReference type="GO" id="GO:0042626">
    <property type="term" value="F:ATPase-coupled transmembrane transporter activity"/>
    <property type="evidence" value="ECO:0007669"/>
    <property type="project" value="TreeGrafter"/>
</dbReference>
<dbReference type="CDD" id="cd03225">
    <property type="entry name" value="ABC_cobalt_CbiO_domain1"/>
    <property type="match status" value="1"/>
</dbReference>
<dbReference type="FunFam" id="3.40.50.300:FF:000224">
    <property type="entry name" value="Energy-coupling factor transporter ATP-binding protein EcfA"/>
    <property type="match status" value="1"/>
</dbReference>
<dbReference type="Gene3D" id="3.40.50.300">
    <property type="entry name" value="P-loop containing nucleotide triphosphate hydrolases"/>
    <property type="match status" value="1"/>
</dbReference>
<dbReference type="InterPro" id="IPR003593">
    <property type="entry name" value="AAA+_ATPase"/>
</dbReference>
<dbReference type="InterPro" id="IPR003439">
    <property type="entry name" value="ABC_transporter-like_ATP-bd"/>
</dbReference>
<dbReference type="InterPro" id="IPR017871">
    <property type="entry name" value="ABC_transporter-like_CS"/>
</dbReference>
<dbReference type="InterPro" id="IPR015856">
    <property type="entry name" value="ABC_transpr_CbiO/EcfA_su"/>
</dbReference>
<dbReference type="InterPro" id="IPR050095">
    <property type="entry name" value="ECF_ABC_transporter_ATP-bd"/>
</dbReference>
<dbReference type="InterPro" id="IPR030946">
    <property type="entry name" value="EcfA2"/>
</dbReference>
<dbReference type="InterPro" id="IPR027417">
    <property type="entry name" value="P-loop_NTPase"/>
</dbReference>
<dbReference type="NCBIfam" id="TIGR04521">
    <property type="entry name" value="ECF_ATPase_2"/>
    <property type="match status" value="1"/>
</dbReference>
<dbReference type="NCBIfam" id="NF010155">
    <property type="entry name" value="PRK13634.1"/>
    <property type="match status" value="1"/>
</dbReference>
<dbReference type="PANTHER" id="PTHR43553:SF27">
    <property type="entry name" value="ENERGY-COUPLING FACTOR TRANSPORTER ATP-BINDING PROTEIN ECFA2"/>
    <property type="match status" value="1"/>
</dbReference>
<dbReference type="PANTHER" id="PTHR43553">
    <property type="entry name" value="HEAVY METAL TRANSPORTER"/>
    <property type="match status" value="1"/>
</dbReference>
<dbReference type="Pfam" id="PF00005">
    <property type="entry name" value="ABC_tran"/>
    <property type="match status" value="1"/>
</dbReference>
<dbReference type="SMART" id="SM00382">
    <property type="entry name" value="AAA"/>
    <property type="match status" value="1"/>
</dbReference>
<dbReference type="SUPFAM" id="SSF52540">
    <property type="entry name" value="P-loop containing nucleoside triphosphate hydrolases"/>
    <property type="match status" value="1"/>
</dbReference>
<dbReference type="PROSITE" id="PS00211">
    <property type="entry name" value="ABC_TRANSPORTER_1"/>
    <property type="match status" value="1"/>
</dbReference>
<dbReference type="PROSITE" id="PS50893">
    <property type="entry name" value="ABC_TRANSPORTER_2"/>
    <property type="match status" value="1"/>
</dbReference>
<dbReference type="PROSITE" id="PS51246">
    <property type="entry name" value="CBIO"/>
    <property type="match status" value="1"/>
</dbReference>
<evidence type="ECO:0000255" key="1">
    <source>
        <dbReference type="HAMAP-Rule" id="MF_01710"/>
    </source>
</evidence>
<feature type="chain" id="PRO_0000091974" description="Energy-coupling factor transporter ATP-binding protein EcfA2">
    <location>
        <begin position="1"/>
        <end position="293"/>
    </location>
</feature>
<feature type="domain" description="ABC transporter" evidence="1">
    <location>
        <begin position="3"/>
        <end position="246"/>
    </location>
</feature>
<feature type="binding site" evidence="1">
    <location>
        <begin position="40"/>
        <end position="47"/>
    </location>
    <ligand>
        <name>ATP</name>
        <dbReference type="ChEBI" id="CHEBI:30616"/>
    </ligand>
</feature>
<organism>
    <name type="scientific">Bacillus cereus (strain ATCC 10987 / NRS 248)</name>
    <dbReference type="NCBI Taxonomy" id="222523"/>
    <lineage>
        <taxon>Bacteria</taxon>
        <taxon>Bacillati</taxon>
        <taxon>Bacillota</taxon>
        <taxon>Bacilli</taxon>
        <taxon>Bacillales</taxon>
        <taxon>Bacillaceae</taxon>
        <taxon>Bacillus</taxon>
        <taxon>Bacillus cereus group</taxon>
    </lineage>
</organism>
<proteinExistence type="inferred from homology"/>
<accession>Q73F66</accession>